<accession>A6TH93</accession>
<dbReference type="EC" id="6.3.4.4" evidence="1"/>
<dbReference type="EMBL" id="CP000647">
    <property type="protein sequence ID" value="ABR79927.1"/>
    <property type="molecule type" value="Genomic_DNA"/>
</dbReference>
<dbReference type="RefSeq" id="WP_002885665.1">
    <property type="nucleotide sequence ID" value="NC_009648.1"/>
</dbReference>
<dbReference type="SMR" id="A6TH93"/>
<dbReference type="STRING" id="272620.KPN_04576"/>
<dbReference type="jPOST" id="A6TH93"/>
<dbReference type="PaxDb" id="272620-KPN_04576"/>
<dbReference type="EnsemblBacteria" id="ABR79927">
    <property type="protein sequence ID" value="ABR79927"/>
    <property type="gene ID" value="KPN_04576"/>
</dbReference>
<dbReference type="KEGG" id="kpn:KPN_04576"/>
<dbReference type="HOGENOM" id="CLU_029848_0_0_6"/>
<dbReference type="UniPathway" id="UPA00075">
    <property type="reaction ID" value="UER00335"/>
</dbReference>
<dbReference type="Proteomes" id="UP000000265">
    <property type="component" value="Chromosome"/>
</dbReference>
<dbReference type="GO" id="GO:0005737">
    <property type="term" value="C:cytoplasm"/>
    <property type="evidence" value="ECO:0007669"/>
    <property type="project" value="UniProtKB-SubCell"/>
</dbReference>
<dbReference type="GO" id="GO:0004019">
    <property type="term" value="F:adenylosuccinate synthase activity"/>
    <property type="evidence" value="ECO:0007669"/>
    <property type="project" value="UniProtKB-UniRule"/>
</dbReference>
<dbReference type="GO" id="GO:0005525">
    <property type="term" value="F:GTP binding"/>
    <property type="evidence" value="ECO:0007669"/>
    <property type="project" value="UniProtKB-UniRule"/>
</dbReference>
<dbReference type="GO" id="GO:0000287">
    <property type="term" value="F:magnesium ion binding"/>
    <property type="evidence" value="ECO:0007669"/>
    <property type="project" value="UniProtKB-UniRule"/>
</dbReference>
<dbReference type="GO" id="GO:0044208">
    <property type="term" value="P:'de novo' AMP biosynthetic process"/>
    <property type="evidence" value="ECO:0007669"/>
    <property type="project" value="UniProtKB-UniRule"/>
</dbReference>
<dbReference type="GO" id="GO:0046040">
    <property type="term" value="P:IMP metabolic process"/>
    <property type="evidence" value="ECO:0007669"/>
    <property type="project" value="TreeGrafter"/>
</dbReference>
<dbReference type="CDD" id="cd03108">
    <property type="entry name" value="AdSS"/>
    <property type="match status" value="1"/>
</dbReference>
<dbReference type="FunFam" id="1.10.300.10:FF:000001">
    <property type="entry name" value="Adenylosuccinate synthetase"/>
    <property type="match status" value="1"/>
</dbReference>
<dbReference type="FunFam" id="3.90.170.10:FF:000001">
    <property type="entry name" value="Adenylosuccinate synthetase"/>
    <property type="match status" value="1"/>
</dbReference>
<dbReference type="Gene3D" id="3.40.440.10">
    <property type="entry name" value="Adenylosuccinate Synthetase, subunit A, domain 1"/>
    <property type="match status" value="1"/>
</dbReference>
<dbReference type="Gene3D" id="1.10.300.10">
    <property type="entry name" value="Adenylosuccinate Synthetase, subunit A, domain 2"/>
    <property type="match status" value="1"/>
</dbReference>
<dbReference type="Gene3D" id="3.90.170.10">
    <property type="entry name" value="Adenylosuccinate Synthetase, subunit A, domain 3"/>
    <property type="match status" value="1"/>
</dbReference>
<dbReference type="HAMAP" id="MF_00011">
    <property type="entry name" value="Adenylosucc_synth"/>
    <property type="match status" value="1"/>
</dbReference>
<dbReference type="InterPro" id="IPR018220">
    <property type="entry name" value="Adenylosuccin_syn_GTP-bd"/>
</dbReference>
<dbReference type="InterPro" id="IPR033128">
    <property type="entry name" value="Adenylosuccin_syn_Lys_AS"/>
</dbReference>
<dbReference type="InterPro" id="IPR042109">
    <property type="entry name" value="Adenylosuccinate_synth_dom1"/>
</dbReference>
<dbReference type="InterPro" id="IPR042110">
    <property type="entry name" value="Adenylosuccinate_synth_dom2"/>
</dbReference>
<dbReference type="InterPro" id="IPR042111">
    <property type="entry name" value="Adenylosuccinate_synth_dom3"/>
</dbReference>
<dbReference type="InterPro" id="IPR001114">
    <property type="entry name" value="Adenylosuccinate_synthetase"/>
</dbReference>
<dbReference type="InterPro" id="IPR027417">
    <property type="entry name" value="P-loop_NTPase"/>
</dbReference>
<dbReference type="NCBIfam" id="NF002223">
    <property type="entry name" value="PRK01117.1"/>
    <property type="match status" value="1"/>
</dbReference>
<dbReference type="NCBIfam" id="TIGR00184">
    <property type="entry name" value="purA"/>
    <property type="match status" value="1"/>
</dbReference>
<dbReference type="PANTHER" id="PTHR11846">
    <property type="entry name" value="ADENYLOSUCCINATE SYNTHETASE"/>
    <property type="match status" value="1"/>
</dbReference>
<dbReference type="PANTHER" id="PTHR11846:SF0">
    <property type="entry name" value="ADENYLOSUCCINATE SYNTHETASE"/>
    <property type="match status" value="1"/>
</dbReference>
<dbReference type="Pfam" id="PF00709">
    <property type="entry name" value="Adenylsucc_synt"/>
    <property type="match status" value="1"/>
</dbReference>
<dbReference type="SMART" id="SM00788">
    <property type="entry name" value="Adenylsucc_synt"/>
    <property type="match status" value="1"/>
</dbReference>
<dbReference type="SUPFAM" id="SSF52540">
    <property type="entry name" value="P-loop containing nucleoside triphosphate hydrolases"/>
    <property type="match status" value="1"/>
</dbReference>
<dbReference type="PROSITE" id="PS01266">
    <property type="entry name" value="ADENYLOSUCCIN_SYN_1"/>
    <property type="match status" value="1"/>
</dbReference>
<dbReference type="PROSITE" id="PS00513">
    <property type="entry name" value="ADENYLOSUCCIN_SYN_2"/>
    <property type="match status" value="1"/>
</dbReference>
<proteinExistence type="inferred from homology"/>
<protein>
    <recommendedName>
        <fullName evidence="1">Adenylosuccinate synthetase</fullName>
        <shortName evidence="1">AMPSase</shortName>
        <shortName evidence="1">AdSS</shortName>
        <ecNumber evidence="1">6.3.4.4</ecNumber>
    </recommendedName>
    <alternativeName>
        <fullName evidence="1">IMP--aspartate ligase</fullName>
    </alternativeName>
</protein>
<feature type="chain" id="PRO_1000000840" description="Adenylosuccinate synthetase">
    <location>
        <begin position="1"/>
        <end position="432"/>
    </location>
</feature>
<feature type="active site" description="Proton acceptor" evidence="1">
    <location>
        <position position="14"/>
    </location>
</feature>
<feature type="active site" description="Proton donor" evidence="1">
    <location>
        <position position="42"/>
    </location>
</feature>
<feature type="binding site" evidence="1">
    <location>
        <begin position="13"/>
        <end position="19"/>
    </location>
    <ligand>
        <name>GTP</name>
        <dbReference type="ChEBI" id="CHEBI:37565"/>
    </ligand>
</feature>
<feature type="binding site" description="in other chain" evidence="1">
    <location>
        <begin position="14"/>
        <end position="17"/>
    </location>
    <ligand>
        <name>IMP</name>
        <dbReference type="ChEBI" id="CHEBI:58053"/>
        <note>ligand shared between dimeric partners</note>
    </ligand>
</feature>
<feature type="binding site" evidence="1">
    <location>
        <position position="14"/>
    </location>
    <ligand>
        <name>Mg(2+)</name>
        <dbReference type="ChEBI" id="CHEBI:18420"/>
    </ligand>
</feature>
<feature type="binding site" description="in other chain" evidence="1">
    <location>
        <begin position="39"/>
        <end position="42"/>
    </location>
    <ligand>
        <name>IMP</name>
        <dbReference type="ChEBI" id="CHEBI:58053"/>
        <note>ligand shared between dimeric partners</note>
    </ligand>
</feature>
<feature type="binding site" evidence="1">
    <location>
        <begin position="41"/>
        <end position="43"/>
    </location>
    <ligand>
        <name>GTP</name>
        <dbReference type="ChEBI" id="CHEBI:37565"/>
    </ligand>
</feature>
<feature type="binding site" evidence="1">
    <location>
        <position position="41"/>
    </location>
    <ligand>
        <name>Mg(2+)</name>
        <dbReference type="ChEBI" id="CHEBI:18420"/>
    </ligand>
</feature>
<feature type="binding site" description="in other chain" evidence="1">
    <location>
        <position position="130"/>
    </location>
    <ligand>
        <name>IMP</name>
        <dbReference type="ChEBI" id="CHEBI:58053"/>
        <note>ligand shared between dimeric partners</note>
    </ligand>
</feature>
<feature type="binding site" evidence="1">
    <location>
        <position position="144"/>
    </location>
    <ligand>
        <name>IMP</name>
        <dbReference type="ChEBI" id="CHEBI:58053"/>
        <note>ligand shared between dimeric partners</note>
    </ligand>
</feature>
<feature type="binding site" description="in other chain" evidence="1">
    <location>
        <position position="225"/>
    </location>
    <ligand>
        <name>IMP</name>
        <dbReference type="ChEBI" id="CHEBI:58053"/>
        <note>ligand shared between dimeric partners</note>
    </ligand>
</feature>
<feature type="binding site" description="in other chain" evidence="1">
    <location>
        <position position="240"/>
    </location>
    <ligand>
        <name>IMP</name>
        <dbReference type="ChEBI" id="CHEBI:58053"/>
        <note>ligand shared between dimeric partners</note>
    </ligand>
</feature>
<feature type="binding site" evidence="1">
    <location>
        <begin position="300"/>
        <end position="306"/>
    </location>
    <ligand>
        <name>substrate</name>
    </ligand>
</feature>
<feature type="binding site" description="in other chain" evidence="1">
    <location>
        <position position="304"/>
    </location>
    <ligand>
        <name>IMP</name>
        <dbReference type="ChEBI" id="CHEBI:58053"/>
        <note>ligand shared between dimeric partners</note>
    </ligand>
</feature>
<feature type="binding site" evidence="1">
    <location>
        <position position="306"/>
    </location>
    <ligand>
        <name>GTP</name>
        <dbReference type="ChEBI" id="CHEBI:37565"/>
    </ligand>
</feature>
<feature type="binding site" evidence="1">
    <location>
        <begin position="332"/>
        <end position="334"/>
    </location>
    <ligand>
        <name>GTP</name>
        <dbReference type="ChEBI" id="CHEBI:37565"/>
    </ligand>
</feature>
<feature type="binding site" evidence="1">
    <location>
        <begin position="415"/>
        <end position="417"/>
    </location>
    <ligand>
        <name>GTP</name>
        <dbReference type="ChEBI" id="CHEBI:37565"/>
    </ligand>
</feature>
<organism>
    <name type="scientific">Klebsiella pneumoniae subsp. pneumoniae (strain ATCC 700721 / MGH 78578)</name>
    <dbReference type="NCBI Taxonomy" id="272620"/>
    <lineage>
        <taxon>Bacteria</taxon>
        <taxon>Pseudomonadati</taxon>
        <taxon>Pseudomonadota</taxon>
        <taxon>Gammaproteobacteria</taxon>
        <taxon>Enterobacterales</taxon>
        <taxon>Enterobacteriaceae</taxon>
        <taxon>Klebsiella/Raoultella group</taxon>
        <taxon>Klebsiella</taxon>
        <taxon>Klebsiella pneumoniae complex</taxon>
    </lineage>
</organism>
<name>PURA_KLEP7</name>
<evidence type="ECO:0000255" key="1">
    <source>
        <dbReference type="HAMAP-Rule" id="MF_00011"/>
    </source>
</evidence>
<gene>
    <name evidence="1" type="primary">purA</name>
    <name type="ordered locus">KPN78578_45030</name>
    <name type="ORF">KPN_04576</name>
</gene>
<comment type="function">
    <text evidence="1">Plays an important role in the de novo pathway of purine nucleotide biosynthesis. Catalyzes the first committed step in the biosynthesis of AMP from IMP.</text>
</comment>
<comment type="catalytic activity">
    <reaction evidence="1">
        <text>IMP + L-aspartate + GTP = N(6)-(1,2-dicarboxyethyl)-AMP + GDP + phosphate + 2 H(+)</text>
        <dbReference type="Rhea" id="RHEA:15753"/>
        <dbReference type="ChEBI" id="CHEBI:15378"/>
        <dbReference type="ChEBI" id="CHEBI:29991"/>
        <dbReference type="ChEBI" id="CHEBI:37565"/>
        <dbReference type="ChEBI" id="CHEBI:43474"/>
        <dbReference type="ChEBI" id="CHEBI:57567"/>
        <dbReference type="ChEBI" id="CHEBI:58053"/>
        <dbReference type="ChEBI" id="CHEBI:58189"/>
        <dbReference type="EC" id="6.3.4.4"/>
    </reaction>
</comment>
<comment type="cofactor">
    <cofactor evidence="1">
        <name>Mg(2+)</name>
        <dbReference type="ChEBI" id="CHEBI:18420"/>
    </cofactor>
    <text evidence="1">Binds 1 Mg(2+) ion per subunit.</text>
</comment>
<comment type="pathway">
    <text evidence="1">Purine metabolism; AMP biosynthesis via de novo pathway; AMP from IMP: step 1/2.</text>
</comment>
<comment type="subunit">
    <text evidence="1">Homodimer.</text>
</comment>
<comment type="subcellular location">
    <subcellularLocation>
        <location evidence="1">Cytoplasm</location>
    </subcellularLocation>
</comment>
<comment type="similarity">
    <text evidence="1">Belongs to the adenylosuccinate synthetase family.</text>
</comment>
<keyword id="KW-0963">Cytoplasm</keyword>
<keyword id="KW-0342">GTP-binding</keyword>
<keyword id="KW-0436">Ligase</keyword>
<keyword id="KW-0460">Magnesium</keyword>
<keyword id="KW-0479">Metal-binding</keyword>
<keyword id="KW-0547">Nucleotide-binding</keyword>
<keyword id="KW-0658">Purine biosynthesis</keyword>
<reference key="1">
    <citation type="submission" date="2006-09" db="EMBL/GenBank/DDBJ databases">
        <authorList>
            <consortium name="The Klebsiella pneumonia Genome Sequencing Project"/>
            <person name="McClelland M."/>
            <person name="Sanderson E.K."/>
            <person name="Spieth J."/>
            <person name="Clifton W.S."/>
            <person name="Latreille P."/>
            <person name="Sabo A."/>
            <person name="Pepin K."/>
            <person name="Bhonagiri V."/>
            <person name="Porwollik S."/>
            <person name="Ali J."/>
            <person name="Wilson R.K."/>
        </authorList>
    </citation>
    <scope>NUCLEOTIDE SEQUENCE [LARGE SCALE GENOMIC DNA]</scope>
    <source>
        <strain>ATCC 700721 / MGH 78578</strain>
    </source>
</reference>
<sequence length="432" mass="47166">MGNNVVVLGTQWGDEGKGKIVDLLTERAKYVVRYQGGHNAGHTLVINGEKTVLHLIPSGILRENVTSIIGNGVVLSPAALMKEMKGLEDRGIPVRERLLLSEACPLILDYHVALDVAREKARGAKAIGTTGRGIGPAYEDKVARRGLRVGDLFDKATFADKLKEVMEYHNFQLVNFYKAEAVDYQKVLDDVMAIADILTSMVVDVSDLLDQARQRGDFVMFEGAQGTLLDIDHGTYPYVTSSNTTAGGVATGSGLGPRYVDYVLGIIKAYSTRVGAGPFPTELFDETGEFLCKQGNEFGATTGRRRRTGWLDAVAVRRAVQINSLSGFCLTKLDVLDGLKEVKICVGYRMPDGREVTTTPLAADNWEGIEPIYETMPGWSETTFGVKERSGLPQAALNYIQRIEELTGVPVDIISTGPDRTETMILRDPFDA</sequence>